<gene>
    <name evidence="1" type="primary">mtfA</name>
    <name type="ordered locus">STM2001</name>
</gene>
<keyword id="KW-0031">Aminopeptidase</keyword>
<keyword id="KW-0963">Cytoplasm</keyword>
<keyword id="KW-0378">Hydrolase</keyword>
<keyword id="KW-0479">Metal-binding</keyword>
<keyword id="KW-0482">Metalloprotease</keyword>
<keyword id="KW-0645">Protease</keyword>
<keyword id="KW-1185">Reference proteome</keyword>
<keyword id="KW-0862">Zinc</keyword>
<proteinExistence type="inferred from homology"/>
<protein>
    <recommendedName>
        <fullName evidence="1">Mlc titration factor A</fullName>
    </recommendedName>
    <alternativeName>
        <fullName evidence="1">Probable zinc metallopeptidase MtfA</fullName>
        <ecNumber evidence="1">3.4.11.-</ecNumber>
    </alternativeName>
</protein>
<evidence type="ECO:0000255" key="1">
    <source>
        <dbReference type="HAMAP-Rule" id="MF_01593"/>
    </source>
</evidence>
<sequence length="265" mass="30192">MIKWPWKAQEITQNEDWPWDDALAIPLLVNLTAQEQARLIALAERFLQQKRLVALQGFELDSLKSARIALIFCLPILELGIEWLDGFHEVLIYPAPFVVDDEWEDDIGLVHSQRVVQSGQSWQQGPIILNWLDIQDSFDASGFNLIIHEVAHKLDMRNGDRASGIPFIPLRDVAGWEHDLHAAMNNIQDEIDLVGESAASIDAYAATDPAECFAVLSEYFFSAPELFAPRFPALWQRFCQFYRQDPSQRLRVSAAEGDYGEESEH</sequence>
<feature type="chain" id="PRO_0000316322" description="Mlc titration factor A">
    <location>
        <begin position="1"/>
        <end position="265"/>
    </location>
</feature>
<feature type="binding site" evidence="1">
    <location>
        <position position="111"/>
    </location>
    <ligand>
        <name>Zn(2+)</name>
        <dbReference type="ChEBI" id="CHEBI:29105"/>
    </ligand>
</feature>
<feature type="binding site" evidence="1">
    <location>
        <position position="148"/>
    </location>
    <ligand>
        <name>Zn(2+)</name>
        <dbReference type="ChEBI" id="CHEBI:29105"/>
    </ligand>
</feature>
<feature type="binding site" evidence="1">
    <location>
        <position position="152"/>
    </location>
    <ligand>
        <name>Zn(2+)</name>
        <dbReference type="ChEBI" id="CHEBI:29105"/>
    </ligand>
</feature>
<feature type="binding site" evidence="1">
    <location>
        <position position="211"/>
    </location>
    <ligand>
        <name>Zn(2+)</name>
        <dbReference type="ChEBI" id="CHEBI:29105"/>
    </ligand>
</feature>
<name>MTFA_SALTY</name>
<dbReference type="EC" id="3.4.11.-" evidence="1"/>
<dbReference type="EMBL" id="AE006468">
    <property type="protein sequence ID" value="AAL20910.1"/>
    <property type="molecule type" value="Genomic_DNA"/>
</dbReference>
<dbReference type="RefSeq" id="WP_000598920.1">
    <property type="nucleotide sequence ID" value="NC_003197.2"/>
</dbReference>
<dbReference type="SMR" id="Q8ZNS5"/>
<dbReference type="STRING" id="99287.STM2001"/>
<dbReference type="MEROPS" id="M90.001"/>
<dbReference type="PaxDb" id="99287-STM2001"/>
<dbReference type="KEGG" id="stm:STM2001"/>
<dbReference type="PATRIC" id="fig|99287.12.peg.2118"/>
<dbReference type="HOGENOM" id="CLU_063037_2_0_6"/>
<dbReference type="OMA" id="EHSGEAW"/>
<dbReference type="PhylomeDB" id="Q8ZNS5"/>
<dbReference type="BioCyc" id="SENT99287:STM2001-MONOMER"/>
<dbReference type="Proteomes" id="UP000001014">
    <property type="component" value="Chromosome"/>
</dbReference>
<dbReference type="GO" id="GO:0005829">
    <property type="term" value="C:cytosol"/>
    <property type="evidence" value="ECO:0000318"/>
    <property type="project" value="GO_Central"/>
</dbReference>
<dbReference type="GO" id="GO:0004177">
    <property type="term" value="F:aminopeptidase activity"/>
    <property type="evidence" value="ECO:0000318"/>
    <property type="project" value="GO_Central"/>
</dbReference>
<dbReference type="GO" id="GO:0008237">
    <property type="term" value="F:metallopeptidase activity"/>
    <property type="evidence" value="ECO:0007669"/>
    <property type="project" value="UniProtKB-UniRule"/>
</dbReference>
<dbReference type="GO" id="GO:0008270">
    <property type="term" value="F:zinc ion binding"/>
    <property type="evidence" value="ECO:0007669"/>
    <property type="project" value="UniProtKB-UniRule"/>
</dbReference>
<dbReference type="GO" id="GO:0006508">
    <property type="term" value="P:proteolysis"/>
    <property type="evidence" value="ECO:0007669"/>
    <property type="project" value="UniProtKB-KW"/>
</dbReference>
<dbReference type="CDD" id="cd20169">
    <property type="entry name" value="Peptidase_M90_mtfA"/>
    <property type="match status" value="1"/>
</dbReference>
<dbReference type="FunFam" id="1.10.472.150:FF:000001">
    <property type="entry name" value="Protein MtfA"/>
    <property type="match status" value="1"/>
</dbReference>
<dbReference type="FunFam" id="3.40.390.10:FF:000012">
    <property type="entry name" value="Protein MtfA"/>
    <property type="match status" value="1"/>
</dbReference>
<dbReference type="Gene3D" id="3.40.390.10">
    <property type="entry name" value="Collagenase (Catalytic Domain)"/>
    <property type="match status" value="1"/>
</dbReference>
<dbReference type="Gene3D" id="1.10.472.150">
    <property type="entry name" value="Glucose-regulated metallo-peptidase M90, N-terminal domain"/>
    <property type="match status" value="1"/>
</dbReference>
<dbReference type="HAMAP" id="MF_01593">
    <property type="entry name" value="MtfA"/>
    <property type="match status" value="1"/>
</dbReference>
<dbReference type="InterPro" id="IPR024079">
    <property type="entry name" value="MetalloPept_cat_dom_sf"/>
</dbReference>
<dbReference type="InterPro" id="IPR057256">
    <property type="entry name" value="MtfA_enterob"/>
</dbReference>
<dbReference type="InterPro" id="IPR010384">
    <property type="entry name" value="MtfA_fam"/>
</dbReference>
<dbReference type="InterPro" id="IPR042252">
    <property type="entry name" value="MtfA_N"/>
</dbReference>
<dbReference type="NCBIfam" id="NF011939">
    <property type="entry name" value="PRK15410.1"/>
    <property type="match status" value="1"/>
</dbReference>
<dbReference type="PANTHER" id="PTHR30164">
    <property type="entry name" value="MTFA PEPTIDASE"/>
    <property type="match status" value="1"/>
</dbReference>
<dbReference type="PANTHER" id="PTHR30164:SF2">
    <property type="entry name" value="PROTEIN MTFA"/>
    <property type="match status" value="1"/>
</dbReference>
<dbReference type="Pfam" id="PF06167">
    <property type="entry name" value="Peptidase_M90"/>
    <property type="match status" value="1"/>
</dbReference>
<dbReference type="SUPFAM" id="SSF55486">
    <property type="entry name" value="Metalloproteases ('zincins'), catalytic domain"/>
    <property type="match status" value="1"/>
</dbReference>
<comment type="function">
    <text evidence="1">Involved in the modulation of the activity of the glucose-phosphotransferase system (glucose-PTS). Interacts with the transcriptional repressor Mlc, preventing its interaction with DNA and leading to the modulation of expression of genes regulated by Mlc, including ptsG, which encodes the PTS system glucose-specific EIICB component.</text>
</comment>
<comment type="function">
    <text evidence="1">Shows zinc-dependent metallopeptidase activity.</text>
</comment>
<comment type="cofactor">
    <cofactor evidence="1">
        <name>Zn(2+)</name>
        <dbReference type="ChEBI" id="CHEBI:29105"/>
    </cofactor>
    <text evidence="1">Binds 1 zinc ion per subunit.</text>
</comment>
<comment type="subunit">
    <text evidence="1">Interacts with Mlc.</text>
</comment>
<comment type="subcellular location">
    <subcellularLocation>
        <location evidence="1">Cytoplasm</location>
    </subcellularLocation>
</comment>
<comment type="similarity">
    <text evidence="1">Belongs to the MtfA family.</text>
</comment>
<organism>
    <name type="scientific">Salmonella typhimurium (strain LT2 / SGSC1412 / ATCC 700720)</name>
    <dbReference type="NCBI Taxonomy" id="99287"/>
    <lineage>
        <taxon>Bacteria</taxon>
        <taxon>Pseudomonadati</taxon>
        <taxon>Pseudomonadota</taxon>
        <taxon>Gammaproteobacteria</taxon>
        <taxon>Enterobacterales</taxon>
        <taxon>Enterobacteriaceae</taxon>
        <taxon>Salmonella</taxon>
    </lineage>
</organism>
<reference key="1">
    <citation type="journal article" date="2001" name="Nature">
        <title>Complete genome sequence of Salmonella enterica serovar Typhimurium LT2.</title>
        <authorList>
            <person name="McClelland M."/>
            <person name="Sanderson K.E."/>
            <person name="Spieth J."/>
            <person name="Clifton S.W."/>
            <person name="Latreille P."/>
            <person name="Courtney L."/>
            <person name="Porwollik S."/>
            <person name="Ali J."/>
            <person name="Dante M."/>
            <person name="Du F."/>
            <person name="Hou S."/>
            <person name="Layman D."/>
            <person name="Leonard S."/>
            <person name="Nguyen C."/>
            <person name="Scott K."/>
            <person name="Holmes A."/>
            <person name="Grewal N."/>
            <person name="Mulvaney E."/>
            <person name="Ryan E."/>
            <person name="Sun H."/>
            <person name="Florea L."/>
            <person name="Miller W."/>
            <person name="Stoneking T."/>
            <person name="Nhan M."/>
            <person name="Waterston R."/>
            <person name="Wilson R.K."/>
        </authorList>
    </citation>
    <scope>NUCLEOTIDE SEQUENCE [LARGE SCALE GENOMIC DNA]</scope>
    <source>
        <strain>LT2 / SGSC1412 / ATCC 700720</strain>
    </source>
</reference>
<accession>Q8ZNS5</accession>